<feature type="chain" id="PRO_0000135998" description="Shikimate dehydrogenase (NADP(+))">
    <location>
        <begin position="1"/>
        <end position="285"/>
    </location>
</feature>
<feature type="active site" description="Proton acceptor" evidence="1">
    <location>
        <position position="73"/>
    </location>
</feature>
<feature type="binding site" evidence="1">
    <location>
        <begin position="22"/>
        <end position="24"/>
    </location>
    <ligand>
        <name>shikimate</name>
        <dbReference type="ChEBI" id="CHEBI:36208"/>
    </ligand>
</feature>
<feature type="binding site" evidence="1">
    <location>
        <position position="69"/>
    </location>
    <ligand>
        <name>shikimate</name>
        <dbReference type="ChEBI" id="CHEBI:36208"/>
    </ligand>
</feature>
<feature type="binding site" evidence="1">
    <location>
        <position position="85"/>
    </location>
    <ligand>
        <name>NADP(+)</name>
        <dbReference type="ChEBI" id="CHEBI:58349"/>
    </ligand>
</feature>
<feature type="binding site" evidence="1">
    <location>
        <position position="94"/>
    </location>
    <ligand>
        <name>shikimate</name>
        <dbReference type="ChEBI" id="CHEBI:36208"/>
    </ligand>
</feature>
<feature type="binding site" evidence="1">
    <location>
        <position position="110"/>
    </location>
    <ligand>
        <name>shikimate</name>
        <dbReference type="ChEBI" id="CHEBI:36208"/>
    </ligand>
</feature>
<feature type="binding site" evidence="1">
    <location>
        <begin position="136"/>
        <end position="140"/>
    </location>
    <ligand>
        <name>NADP(+)</name>
        <dbReference type="ChEBI" id="CHEBI:58349"/>
    </ligand>
</feature>
<feature type="binding site" evidence="1">
    <location>
        <begin position="160"/>
        <end position="165"/>
    </location>
    <ligand>
        <name>NADP(+)</name>
        <dbReference type="ChEBI" id="CHEBI:58349"/>
    </ligand>
</feature>
<feature type="binding site" evidence="1">
    <location>
        <position position="225"/>
    </location>
    <ligand>
        <name>NADP(+)</name>
        <dbReference type="ChEBI" id="CHEBI:58349"/>
    </ligand>
</feature>
<feature type="binding site" evidence="1">
    <location>
        <position position="227"/>
    </location>
    <ligand>
        <name>shikimate</name>
        <dbReference type="ChEBI" id="CHEBI:36208"/>
    </ligand>
</feature>
<feature type="binding site" evidence="1">
    <location>
        <position position="248"/>
    </location>
    <ligand>
        <name>NADP(+)</name>
        <dbReference type="ChEBI" id="CHEBI:58349"/>
    </ligand>
</feature>
<protein>
    <recommendedName>
        <fullName evidence="1">Shikimate dehydrogenase (NADP(+))</fullName>
        <shortName evidence="1">SDH</shortName>
        <ecNumber evidence="1">1.1.1.25</ecNumber>
    </recommendedName>
</protein>
<sequence length="285" mass="29015">MTNAITGAAIVGGVCGQPIKHSMSPVIHNAWIAAAGLDAAYVPFAPAADRFETFVDGLRGGAVRGLNVTIPFKERALAVADTASDLARMAGAANLLVFNEDGSVHADNTDGPGLLGAIAIQAPGFDVTAAPVVILGAGGAARGAVAALLLAGAPRIAVVNRTVARAQDLADTFGEKVVAKGEDALPALLPEAGLIINATSLGLGGGAGPSADLTLTPKTAVVMDMVYKPLRTEFLRRAEAAGRRTVDGLEMLLRQAIPTFETIYGQAPSPKIDVRVLALKLLGEV</sequence>
<evidence type="ECO:0000255" key="1">
    <source>
        <dbReference type="HAMAP-Rule" id="MF_00222"/>
    </source>
</evidence>
<proteinExistence type="inferred from homology"/>
<dbReference type="EC" id="1.1.1.25" evidence="1"/>
<dbReference type="EMBL" id="AE005673">
    <property type="protein sequence ID" value="AAK21991.1"/>
    <property type="molecule type" value="Genomic_DNA"/>
</dbReference>
<dbReference type="PIR" id="C87249">
    <property type="entry name" value="C87249"/>
</dbReference>
<dbReference type="RefSeq" id="NP_418823.1">
    <property type="nucleotide sequence ID" value="NC_002696.2"/>
</dbReference>
<dbReference type="RefSeq" id="WP_010917894.1">
    <property type="nucleotide sequence ID" value="NC_002696.2"/>
</dbReference>
<dbReference type="SMR" id="Q9AC57"/>
<dbReference type="STRING" id="190650.CC_0003"/>
<dbReference type="EnsemblBacteria" id="AAK21991">
    <property type="protein sequence ID" value="AAK21991"/>
    <property type="gene ID" value="CC_0003"/>
</dbReference>
<dbReference type="KEGG" id="ccr:CC_0003"/>
<dbReference type="PATRIC" id="fig|190650.5.peg.3"/>
<dbReference type="eggNOG" id="COG0169">
    <property type="taxonomic scope" value="Bacteria"/>
</dbReference>
<dbReference type="HOGENOM" id="CLU_044063_2_0_5"/>
<dbReference type="BioCyc" id="CAULO:CC0003-MONOMER"/>
<dbReference type="UniPathway" id="UPA00053">
    <property type="reaction ID" value="UER00087"/>
</dbReference>
<dbReference type="Proteomes" id="UP000001816">
    <property type="component" value="Chromosome"/>
</dbReference>
<dbReference type="GO" id="GO:0005829">
    <property type="term" value="C:cytosol"/>
    <property type="evidence" value="ECO:0007669"/>
    <property type="project" value="TreeGrafter"/>
</dbReference>
<dbReference type="GO" id="GO:0050661">
    <property type="term" value="F:NADP binding"/>
    <property type="evidence" value="ECO:0007669"/>
    <property type="project" value="InterPro"/>
</dbReference>
<dbReference type="GO" id="GO:0004764">
    <property type="term" value="F:shikimate 3-dehydrogenase (NADP+) activity"/>
    <property type="evidence" value="ECO:0007669"/>
    <property type="project" value="UniProtKB-UniRule"/>
</dbReference>
<dbReference type="GO" id="GO:0008652">
    <property type="term" value="P:amino acid biosynthetic process"/>
    <property type="evidence" value="ECO:0007669"/>
    <property type="project" value="UniProtKB-KW"/>
</dbReference>
<dbReference type="GO" id="GO:0009073">
    <property type="term" value="P:aromatic amino acid family biosynthetic process"/>
    <property type="evidence" value="ECO:0007669"/>
    <property type="project" value="UniProtKB-KW"/>
</dbReference>
<dbReference type="GO" id="GO:0009423">
    <property type="term" value="P:chorismate biosynthetic process"/>
    <property type="evidence" value="ECO:0007669"/>
    <property type="project" value="UniProtKB-UniRule"/>
</dbReference>
<dbReference type="GO" id="GO:0019632">
    <property type="term" value="P:shikimate metabolic process"/>
    <property type="evidence" value="ECO:0007669"/>
    <property type="project" value="InterPro"/>
</dbReference>
<dbReference type="CDD" id="cd01065">
    <property type="entry name" value="NAD_bind_Shikimate_DH"/>
    <property type="match status" value="1"/>
</dbReference>
<dbReference type="Gene3D" id="3.40.50.10860">
    <property type="entry name" value="Leucine Dehydrogenase, chain A, domain 1"/>
    <property type="match status" value="1"/>
</dbReference>
<dbReference type="Gene3D" id="3.40.50.720">
    <property type="entry name" value="NAD(P)-binding Rossmann-like Domain"/>
    <property type="match status" value="1"/>
</dbReference>
<dbReference type="HAMAP" id="MF_00222">
    <property type="entry name" value="Shikimate_DH_AroE"/>
    <property type="match status" value="1"/>
</dbReference>
<dbReference type="InterPro" id="IPR046346">
    <property type="entry name" value="Aminoacid_DH-like_N_sf"/>
</dbReference>
<dbReference type="InterPro" id="IPR036291">
    <property type="entry name" value="NAD(P)-bd_dom_sf"/>
</dbReference>
<dbReference type="InterPro" id="IPR011342">
    <property type="entry name" value="Shikimate_DH"/>
</dbReference>
<dbReference type="InterPro" id="IPR013708">
    <property type="entry name" value="Shikimate_DH-bd_N"/>
</dbReference>
<dbReference type="InterPro" id="IPR022893">
    <property type="entry name" value="Shikimate_DH_fam"/>
</dbReference>
<dbReference type="InterPro" id="IPR006151">
    <property type="entry name" value="Shikm_DH/Glu-tRNA_Rdtase"/>
</dbReference>
<dbReference type="NCBIfam" id="TIGR00507">
    <property type="entry name" value="aroE"/>
    <property type="match status" value="1"/>
</dbReference>
<dbReference type="PANTHER" id="PTHR21089:SF1">
    <property type="entry name" value="BIFUNCTIONAL 3-DEHYDROQUINATE DEHYDRATASE_SHIKIMATE DEHYDROGENASE, CHLOROPLASTIC"/>
    <property type="match status" value="1"/>
</dbReference>
<dbReference type="PANTHER" id="PTHR21089">
    <property type="entry name" value="SHIKIMATE DEHYDROGENASE"/>
    <property type="match status" value="1"/>
</dbReference>
<dbReference type="Pfam" id="PF01488">
    <property type="entry name" value="Shikimate_DH"/>
    <property type="match status" value="1"/>
</dbReference>
<dbReference type="Pfam" id="PF08501">
    <property type="entry name" value="Shikimate_dh_N"/>
    <property type="match status" value="1"/>
</dbReference>
<dbReference type="SUPFAM" id="SSF53223">
    <property type="entry name" value="Aminoacid dehydrogenase-like, N-terminal domain"/>
    <property type="match status" value="1"/>
</dbReference>
<dbReference type="SUPFAM" id="SSF51735">
    <property type="entry name" value="NAD(P)-binding Rossmann-fold domains"/>
    <property type="match status" value="1"/>
</dbReference>
<reference key="1">
    <citation type="journal article" date="2001" name="Proc. Natl. Acad. Sci. U.S.A.">
        <title>Complete genome sequence of Caulobacter crescentus.</title>
        <authorList>
            <person name="Nierman W.C."/>
            <person name="Feldblyum T.V."/>
            <person name="Laub M.T."/>
            <person name="Paulsen I.T."/>
            <person name="Nelson K.E."/>
            <person name="Eisen J.A."/>
            <person name="Heidelberg J.F."/>
            <person name="Alley M.R.K."/>
            <person name="Ohta N."/>
            <person name="Maddock J.R."/>
            <person name="Potocka I."/>
            <person name="Nelson W.C."/>
            <person name="Newton A."/>
            <person name="Stephens C."/>
            <person name="Phadke N.D."/>
            <person name="Ely B."/>
            <person name="DeBoy R.T."/>
            <person name="Dodson R.J."/>
            <person name="Durkin A.S."/>
            <person name="Gwinn M.L."/>
            <person name="Haft D.H."/>
            <person name="Kolonay J.F."/>
            <person name="Smit J."/>
            <person name="Craven M.B."/>
            <person name="Khouri H.M."/>
            <person name="Shetty J."/>
            <person name="Berry K.J."/>
            <person name="Utterback T.R."/>
            <person name="Tran K."/>
            <person name="Wolf A.M."/>
            <person name="Vamathevan J.J."/>
            <person name="Ermolaeva M.D."/>
            <person name="White O."/>
            <person name="Salzberg S.L."/>
            <person name="Venter J.C."/>
            <person name="Shapiro L."/>
            <person name="Fraser C.M."/>
        </authorList>
    </citation>
    <scope>NUCLEOTIDE SEQUENCE [LARGE SCALE GENOMIC DNA]</scope>
    <source>
        <strain>ATCC 19089 / CIP 103742 / CB 15</strain>
    </source>
</reference>
<keyword id="KW-0028">Amino-acid biosynthesis</keyword>
<keyword id="KW-0057">Aromatic amino acid biosynthesis</keyword>
<keyword id="KW-0521">NADP</keyword>
<keyword id="KW-0560">Oxidoreductase</keyword>
<keyword id="KW-1185">Reference proteome</keyword>
<gene>
    <name evidence="1" type="primary">aroE</name>
    <name type="ordered locus">CC_0003</name>
</gene>
<organism>
    <name type="scientific">Caulobacter vibrioides (strain ATCC 19089 / CIP 103742 / CB 15)</name>
    <name type="common">Caulobacter crescentus</name>
    <dbReference type="NCBI Taxonomy" id="190650"/>
    <lineage>
        <taxon>Bacteria</taxon>
        <taxon>Pseudomonadati</taxon>
        <taxon>Pseudomonadota</taxon>
        <taxon>Alphaproteobacteria</taxon>
        <taxon>Caulobacterales</taxon>
        <taxon>Caulobacteraceae</taxon>
        <taxon>Caulobacter</taxon>
    </lineage>
</organism>
<accession>Q9AC57</accession>
<name>AROE_CAUVC</name>
<comment type="function">
    <text evidence="1">Involved in the biosynthesis of the chorismate, which leads to the biosynthesis of aromatic amino acids. Catalyzes the reversible NADPH linked reduction of 3-dehydroshikimate (DHSA) to yield shikimate (SA).</text>
</comment>
<comment type="catalytic activity">
    <reaction evidence="1">
        <text>shikimate + NADP(+) = 3-dehydroshikimate + NADPH + H(+)</text>
        <dbReference type="Rhea" id="RHEA:17737"/>
        <dbReference type="ChEBI" id="CHEBI:15378"/>
        <dbReference type="ChEBI" id="CHEBI:16630"/>
        <dbReference type="ChEBI" id="CHEBI:36208"/>
        <dbReference type="ChEBI" id="CHEBI:57783"/>
        <dbReference type="ChEBI" id="CHEBI:58349"/>
        <dbReference type="EC" id="1.1.1.25"/>
    </reaction>
</comment>
<comment type="pathway">
    <text evidence="1">Metabolic intermediate biosynthesis; chorismate biosynthesis; chorismate from D-erythrose 4-phosphate and phosphoenolpyruvate: step 4/7.</text>
</comment>
<comment type="subunit">
    <text evidence="1">Homodimer.</text>
</comment>
<comment type="similarity">
    <text evidence="1">Belongs to the shikimate dehydrogenase family.</text>
</comment>